<sequence>MQTFILAGGCFWCLDAVYRTLDGVQDVISGYIGGHTAHPSYDAVCTGATGHAEAVKVVFDEEVIPADVILDVFFTLHDPRQLNRQGADVGTQYRSAMFPADAAQEQLFRDAISRAGELWDGTAVTTIEPVGTWYDAEDYHQDFFAKNPGQGYCNAVAVPKVNKVRKSFAQYVRAA</sequence>
<reference key="1">
    <citation type="journal article" date="2008" name="J. Bacteriol.">
        <title>The genome sequence of the tomato-pathogenic actinomycete Clavibacter michiganensis subsp. michiganensis NCPPB382 reveals a large island involved in pathogenicity.</title>
        <authorList>
            <person name="Gartemann K.-H."/>
            <person name="Abt B."/>
            <person name="Bekel T."/>
            <person name="Burger A."/>
            <person name="Engemann J."/>
            <person name="Fluegel M."/>
            <person name="Gaigalat L."/>
            <person name="Goesmann A."/>
            <person name="Graefen I."/>
            <person name="Kalinowski J."/>
            <person name="Kaup O."/>
            <person name="Kirchner O."/>
            <person name="Krause L."/>
            <person name="Linke B."/>
            <person name="McHardy A."/>
            <person name="Meyer F."/>
            <person name="Pohle S."/>
            <person name="Rueckert C."/>
            <person name="Schneiker S."/>
            <person name="Zellermann E.-M."/>
            <person name="Puehler A."/>
            <person name="Eichenlaub R."/>
            <person name="Kaiser O."/>
            <person name="Bartels D."/>
        </authorList>
    </citation>
    <scope>NUCLEOTIDE SEQUENCE [LARGE SCALE GENOMIC DNA]</scope>
    <source>
        <strain>NCPPB 382</strain>
    </source>
</reference>
<dbReference type="EC" id="1.8.4.11" evidence="1"/>
<dbReference type="EMBL" id="AM711867">
    <property type="protein sequence ID" value="CAN01491.1"/>
    <property type="molecule type" value="Genomic_DNA"/>
</dbReference>
<dbReference type="RefSeq" id="WP_012038132.1">
    <property type="nucleotide sequence ID" value="NC_009480.1"/>
</dbReference>
<dbReference type="SMR" id="A5CQY7"/>
<dbReference type="GeneID" id="92947421"/>
<dbReference type="KEGG" id="cmi:CMM_1446"/>
<dbReference type="eggNOG" id="COG0225">
    <property type="taxonomic scope" value="Bacteria"/>
</dbReference>
<dbReference type="HOGENOM" id="CLU_031040_10_0_11"/>
<dbReference type="OrthoDB" id="4174719at2"/>
<dbReference type="Proteomes" id="UP000001564">
    <property type="component" value="Chromosome"/>
</dbReference>
<dbReference type="GO" id="GO:0033744">
    <property type="term" value="F:L-methionine:thioredoxin-disulfide S-oxidoreductase activity"/>
    <property type="evidence" value="ECO:0007669"/>
    <property type="project" value="RHEA"/>
</dbReference>
<dbReference type="GO" id="GO:0008113">
    <property type="term" value="F:peptide-methionine (S)-S-oxide reductase activity"/>
    <property type="evidence" value="ECO:0007669"/>
    <property type="project" value="UniProtKB-UniRule"/>
</dbReference>
<dbReference type="GO" id="GO:0036211">
    <property type="term" value="P:protein modification process"/>
    <property type="evidence" value="ECO:0007669"/>
    <property type="project" value="UniProtKB-UniRule"/>
</dbReference>
<dbReference type="Gene3D" id="3.30.1060.10">
    <property type="entry name" value="Peptide methionine sulphoxide reductase MsrA"/>
    <property type="match status" value="1"/>
</dbReference>
<dbReference type="HAMAP" id="MF_01401">
    <property type="entry name" value="MsrA"/>
    <property type="match status" value="1"/>
</dbReference>
<dbReference type="InterPro" id="IPR002569">
    <property type="entry name" value="Met_Sox_Rdtase_MsrA_dom"/>
</dbReference>
<dbReference type="InterPro" id="IPR036509">
    <property type="entry name" value="Met_Sox_Rdtase_MsrA_sf"/>
</dbReference>
<dbReference type="NCBIfam" id="TIGR00401">
    <property type="entry name" value="msrA"/>
    <property type="match status" value="1"/>
</dbReference>
<dbReference type="PANTHER" id="PTHR43774">
    <property type="entry name" value="PEPTIDE METHIONINE SULFOXIDE REDUCTASE"/>
    <property type="match status" value="1"/>
</dbReference>
<dbReference type="PANTHER" id="PTHR43774:SF1">
    <property type="entry name" value="PEPTIDE METHIONINE SULFOXIDE REDUCTASE MSRA 2"/>
    <property type="match status" value="1"/>
</dbReference>
<dbReference type="Pfam" id="PF01625">
    <property type="entry name" value="PMSR"/>
    <property type="match status" value="1"/>
</dbReference>
<dbReference type="SUPFAM" id="SSF55068">
    <property type="entry name" value="Peptide methionine sulfoxide reductase"/>
    <property type="match status" value="1"/>
</dbReference>
<protein>
    <recommendedName>
        <fullName evidence="1">Peptide methionine sulfoxide reductase MsrA</fullName>
        <shortName evidence="1">Protein-methionine-S-oxide reductase</shortName>
        <ecNumber evidence="1">1.8.4.11</ecNumber>
    </recommendedName>
    <alternativeName>
        <fullName evidence="1">Peptide-methionine (S)-S-oxide reductase</fullName>
        <shortName evidence="1">Peptide Met(O) reductase</shortName>
    </alternativeName>
</protein>
<gene>
    <name evidence="1" type="primary">msrA</name>
    <name type="ordered locus">CMM_1446</name>
</gene>
<accession>A5CQY7</accession>
<evidence type="ECO:0000255" key="1">
    <source>
        <dbReference type="HAMAP-Rule" id="MF_01401"/>
    </source>
</evidence>
<organism>
    <name type="scientific">Clavibacter michiganensis subsp. michiganensis (strain NCPPB 382)</name>
    <dbReference type="NCBI Taxonomy" id="443906"/>
    <lineage>
        <taxon>Bacteria</taxon>
        <taxon>Bacillati</taxon>
        <taxon>Actinomycetota</taxon>
        <taxon>Actinomycetes</taxon>
        <taxon>Micrococcales</taxon>
        <taxon>Microbacteriaceae</taxon>
        <taxon>Clavibacter</taxon>
    </lineage>
</organism>
<feature type="chain" id="PRO_1000068317" description="Peptide methionine sulfoxide reductase MsrA">
    <location>
        <begin position="1"/>
        <end position="175"/>
    </location>
</feature>
<feature type="active site" evidence="1">
    <location>
        <position position="10"/>
    </location>
</feature>
<comment type="function">
    <text evidence="1">Has an important function as a repair enzyme for proteins that have been inactivated by oxidation. Catalyzes the reversible oxidation-reduction of methionine sulfoxide in proteins to methionine.</text>
</comment>
<comment type="catalytic activity">
    <reaction evidence="1">
        <text>L-methionyl-[protein] + [thioredoxin]-disulfide + H2O = L-methionyl-(S)-S-oxide-[protein] + [thioredoxin]-dithiol</text>
        <dbReference type="Rhea" id="RHEA:14217"/>
        <dbReference type="Rhea" id="RHEA-COMP:10698"/>
        <dbReference type="Rhea" id="RHEA-COMP:10700"/>
        <dbReference type="Rhea" id="RHEA-COMP:12313"/>
        <dbReference type="Rhea" id="RHEA-COMP:12315"/>
        <dbReference type="ChEBI" id="CHEBI:15377"/>
        <dbReference type="ChEBI" id="CHEBI:16044"/>
        <dbReference type="ChEBI" id="CHEBI:29950"/>
        <dbReference type="ChEBI" id="CHEBI:44120"/>
        <dbReference type="ChEBI" id="CHEBI:50058"/>
        <dbReference type="EC" id="1.8.4.11"/>
    </reaction>
</comment>
<comment type="catalytic activity">
    <reaction evidence="1">
        <text>[thioredoxin]-disulfide + L-methionine + H2O = L-methionine (S)-S-oxide + [thioredoxin]-dithiol</text>
        <dbReference type="Rhea" id="RHEA:19993"/>
        <dbReference type="Rhea" id="RHEA-COMP:10698"/>
        <dbReference type="Rhea" id="RHEA-COMP:10700"/>
        <dbReference type="ChEBI" id="CHEBI:15377"/>
        <dbReference type="ChEBI" id="CHEBI:29950"/>
        <dbReference type="ChEBI" id="CHEBI:50058"/>
        <dbReference type="ChEBI" id="CHEBI:57844"/>
        <dbReference type="ChEBI" id="CHEBI:58772"/>
        <dbReference type="EC" id="1.8.4.11"/>
    </reaction>
</comment>
<comment type="similarity">
    <text evidence="1">Belongs to the MsrA Met sulfoxide reductase family.</text>
</comment>
<keyword id="KW-0560">Oxidoreductase</keyword>
<name>MSRA_CLAM3</name>
<proteinExistence type="inferred from homology"/>